<organism>
    <name type="scientific">Burkholderia mallei (strain ATCC 23344)</name>
    <dbReference type="NCBI Taxonomy" id="243160"/>
    <lineage>
        <taxon>Bacteria</taxon>
        <taxon>Pseudomonadati</taxon>
        <taxon>Pseudomonadota</taxon>
        <taxon>Betaproteobacteria</taxon>
        <taxon>Burkholderiales</taxon>
        <taxon>Burkholderiaceae</taxon>
        <taxon>Burkholderia</taxon>
        <taxon>pseudomallei group</taxon>
    </lineage>
</organism>
<sequence>MQLLTIGINHHTAPVALRERVAFPLEQIKPALSTFKSVFLGHPAPNAPEAAILSTCNRTELYCATNDRAARDAAIRWMSDYHRIPADELAPHVYALPQSEAVRHAFRVASGLDSMVLGETQILGQMKNAVRTASEAGSLGTYLNQLFQRTFAVAKEVRGTTEIGAQSVSMAAAAVRLAQRIFEQVAQQRVLFIGAGEMIELCATHFAAQGPRELVVANRTAERGAKLAERFGGRAMPLADLPARMHEFDIIVSCTASTLPIIGLGAVERAVKARRHRPIFMVDLAVPRDIEPEVGKLKDVFLYTVDDLGAIVREGNASRQAAVAQAEAIIETRVQNFMQWLDARSIVPVIRHMHTQADALRRAEVERARKMLARGDDPDAVLDALSQALTNKLIHGPTSALNRANGADRDSLIDLMRGFYQHAPRSSDTSDR</sequence>
<protein>
    <recommendedName>
        <fullName evidence="1">Glutamyl-tRNA reductase</fullName>
        <shortName evidence="1">GluTR</shortName>
        <ecNumber evidence="1">1.2.1.70</ecNumber>
    </recommendedName>
</protein>
<gene>
    <name evidence="1" type="primary">hemA</name>
    <name type="ordered locus">BMAA0505</name>
</gene>
<comment type="function">
    <text evidence="1">Catalyzes the NADPH-dependent reduction of glutamyl-tRNA(Glu) to glutamate 1-semialdehyde (GSA).</text>
</comment>
<comment type="catalytic activity">
    <reaction evidence="1">
        <text>(S)-4-amino-5-oxopentanoate + tRNA(Glu) + NADP(+) = L-glutamyl-tRNA(Glu) + NADPH + H(+)</text>
        <dbReference type="Rhea" id="RHEA:12344"/>
        <dbReference type="Rhea" id="RHEA-COMP:9663"/>
        <dbReference type="Rhea" id="RHEA-COMP:9680"/>
        <dbReference type="ChEBI" id="CHEBI:15378"/>
        <dbReference type="ChEBI" id="CHEBI:57501"/>
        <dbReference type="ChEBI" id="CHEBI:57783"/>
        <dbReference type="ChEBI" id="CHEBI:58349"/>
        <dbReference type="ChEBI" id="CHEBI:78442"/>
        <dbReference type="ChEBI" id="CHEBI:78520"/>
        <dbReference type="EC" id="1.2.1.70"/>
    </reaction>
</comment>
<comment type="pathway">
    <text evidence="1">Porphyrin-containing compound metabolism; protoporphyrin-IX biosynthesis; 5-aminolevulinate from L-glutamyl-tRNA(Glu): step 1/2.</text>
</comment>
<comment type="subunit">
    <text evidence="1">Homodimer.</text>
</comment>
<comment type="domain">
    <text evidence="1">Possesses an unusual extended V-shaped dimeric structure with each monomer consisting of three distinct domains arranged along a curved 'spinal' alpha-helix. The N-terminal catalytic domain specifically recognizes the glutamate moiety of the substrate. The second domain is the NADPH-binding domain, and the third C-terminal domain is responsible for dimerization.</text>
</comment>
<comment type="miscellaneous">
    <text evidence="1">During catalysis, the active site Cys acts as a nucleophile attacking the alpha-carbonyl group of tRNA-bound glutamate with the formation of a thioester intermediate between enzyme and glutamate, and the concomitant release of tRNA(Glu). The thioester intermediate is finally reduced by direct hydride transfer from NADPH, to form the product GSA.</text>
</comment>
<comment type="similarity">
    <text evidence="1">Belongs to the glutamyl-tRNA reductase family.</text>
</comment>
<evidence type="ECO:0000255" key="1">
    <source>
        <dbReference type="HAMAP-Rule" id="MF_00087"/>
    </source>
</evidence>
<accession>Q62DF2</accession>
<name>HEM1_BURMA</name>
<feature type="chain" id="PRO_0000114000" description="Glutamyl-tRNA reductase">
    <location>
        <begin position="1"/>
        <end position="432"/>
    </location>
</feature>
<feature type="active site" description="Nucleophile" evidence="1">
    <location>
        <position position="56"/>
    </location>
</feature>
<feature type="binding site" evidence="1">
    <location>
        <begin position="55"/>
        <end position="58"/>
    </location>
    <ligand>
        <name>substrate</name>
    </ligand>
</feature>
<feature type="binding site" evidence="1">
    <location>
        <position position="114"/>
    </location>
    <ligand>
        <name>substrate</name>
    </ligand>
</feature>
<feature type="binding site" evidence="1">
    <location>
        <begin position="119"/>
        <end position="121"/>
    </location>
    <ligand>
        <name>substrate</name>
    </ligand>
</feature>
<feature type="binding site" evidence="1">
    <location>
        <position position="125"/>
    </location>
    <ligand>
        <name>substrate</name>
    </ligand>
</feature>
<feature type="binding site" evidence="1">
    <location>
        <begin position="194"/>
        <end position="199"/>
    </location>
    <ligand>
        <name>NADP(+)</name>
        <dbReference type="ChEBI" id="CHEBI:58349"/>
    </ligand>
</feature>
<feature type="site" description="Important for activity" evidence="1">
    <location>
        <position position="104"/>
    </location>
</feature>
<keyword id="KW-0521">NADP</keyword>
<keyword id="KW-0560">Oxidoreductase</keyword>
<keyword id="KW-0627">Porphyrin biosynthesis</keyword>
<keyword id="KW-1185">Reference proteome</keyword>
<reference key="1">
    <citation type="journal article" date="2004" name="Proc. Natl. Acad. Sci. U.S.A.">
        <title>Structural flexibility in the Burkholderia mallei genome.</title>
        <authorList>
            <person name="Nierman W.C."/>
            <person name="DeShazer D."/>
            <person name="Kim H.S."/>
            <person name="Tettelin H."/>
            <person name="Nelson K.E."/>
            <person name="Feldblyum T.V."/>
            <person name="Ulrich R.L."/>
            <person name="Ronning C.M."/>
            <person name="Brinkac L.M."/>
            <person name="Daugherty S.C."/>
            <person name="Davidsen T.D."/>
            <person name="DeBoy R.T."/>
            <person name="Dimitrov G."/>
            <person name="Dodson R.J."/>
            <person name="Durkin A.S."/>
            <person name="Gwinn M.L."/>
            <person name="Haft D.H."/>
            <person name="Khouri H.M."/>
            <person name="Kolonay J.F."/>
            <person name="Madupu R."/>
            <person name="Mohammoud Y."/>
            <person name="Nelson W.C."/>
            <person name="Radune D."/>
            <person name="Romero C.M."/>
            <person name="Sarria S."/>
            <person name="Selengut J."/>
            <person name="Shamblin C."/>
            <person name="Sullivan S.A."/>
            <person name="White O."/>
            <person name="Yu Y."/>
            <person name="Zafar N."/>
            <person name="Zhou L."/>
            <person name="Fraser C.M."/>
        </authorList>
    </citation>
    <scope>NUCLEOTIDE SEQUENCE [LARGE SCALE GENOMIC DNA]</scope>
    <source>
        <strain>ATCC 23344</strain>
    </source>
</reference>
<dbReference type="EC" id="1.2.1.70" evidence="1"/>
<dbReference type="EMBL" id="CP000011">
    <property type="protein sequence ID" value="AAU46609.1"/>
    <property type="molecule type" value="Genomic_DNA"/>
</dbReference>
<dbReference type="RefSeq" id="WP_004521984.1">
    <property type="nucleotide sequence ID" value="NC_006349.2"/>
</dbReference>
<dbReference type="RefSeq" id="YP_105276.1">
    <property type="nucleotide sequence ID" value="NC_006349.2"/>
</dbReference>
<dbReference type="SMR" id="Q62DF2"/>
<dbReference type="GeneID" id="93061686"/>
<dbReference type="KEGG" id="bma:BMAA0505"/>
<dbReference type="PATRIC" id="fig|243160.12.peg.4012"/>
<dbReference type="eggNOG" id="COG0373">
    <property type="taxonomic scope" value="Bacteria"/>
</dbReference>
<dbReference type="HOGENOM" id="CLU_035113_2_2_4"/>
<dbReference type="UniPathway" id="UPA00251">
    <property type="reaction ID" value="UER00316"/>
</dbReference>
<dbReference type="Proteomes" id="UP000006693">
    <property type="component" value="Chromosome 2"/>
</dbReference>
<dbReference type="GO" id="GO:0008883">
    <property type="term" value="F:glutamyl-tRNA reductase activity"/>
    <property type="evidence" value="ECO:0007669"/>
    <property type="project" value="UniProtKB-UniRule"/>
</dbReference>
<dbReference type="GO" id="GO:0050661">
    <property type="term" value="F:NADP binding"/>
    <property type="evidence" value="ECO:0007669"/>
    <property type="project" value="InterPro"/>
</dbReference>
<dbReference type="GO" id="GO:0019353">
    <property type="term" value="P:protoporphyrinogen IX biosynthetic process from glutamate"/>
    <property type="evidence" value="ECO:0007669"/>
    <property type="project" value="TreeGrafter"/>
</dbReference>
<dbReference type="CDD" id="cd05213">
    <property type="entry name" value="NAD_bind_Glutamyl_tRNA_reduct"/>
    <property type="match status" value="1"/>
</dbReference>
<dbReference type="FunFam" id="3.30.460.30:FF:000001">
    <property type="entry name" value="Glutamyl-tRNA reductase"/>
    <property type="match status" value="1"/>
</dbReference>
<dbReference type="FunFam" id="3.40.50.720:FF:000031">
    <property type="entry name" value="Glutamyl-tRNA reductase"/>
    <property type="match status" value="1"/>
</dbReference>
<dbReference type="Gene3D" id="3.30.460.30">
    <property type="entry name" value="Glutamyl-tRNA reductase, N-terminal domain"/>
    <property type="match status" value="1"/>
</dbReference>
<dbReference type="Gene3D" id="3.40.50.720">
    <property type="entry name" value="NAD(P)-binding Rossmann-like Domain"/>
    <property type="match status" value="1"/>
</dbReference>
<dbReference type="HAMAP" id="MF_00087">
    <property type="entry name" value="Glu_tRNA_reductase"/>
    <property type="match status" value="1"/>
</dbReference>
<dbReference type="InterPro" id="IPR000343">
    <property type="entry name" value="4pyrrol_synth_GluRdtase"/>
</dbReference>
<dbReference type="InterPro" id="IPR015896">
    <property type="entry name" value="4pyrrol_synth_GluRdtase_dimer"/>
</dbReference>
<dbReference type="InterPro" id="IPR015895">
    <property type="entry name" value="4pyrrol_synth_GluRdtase_N"/>
</dbReference>
<dbReference type="InterPro" id="IPR018214">
    <property type="entry name" value="GluRdtase_CS"/>
</dbReference>
<dbReference type="InterPro" id="IPR036453">
    <property type="entry name" value="GluRdtase_dimer_dom_sf"/>
</dbReference>
<dbReference type="InterPro" id="IPR036343">
    <property type="entry name" value="GluRdtase_N_sf"/>
</dbReference>
<dbReference type="InterPro" id="IPR036291">
    <property type="entry name" value="NAD(P)-bd_dom_sf"/>
</dbReference>
<dbReference type="InterPro" id="IPR006151">
    <property type="entry name" value="Shikm_DH/Glu-tRNA_Rdtase"/>
</dbReference>
<dbReference type="NCBIfam" id="TIGR01035">
    <property type="entry name" value="hemA"/>
    <property type="match status" value="1"/>
</dbReference>
<dbReference type="PANTHER" id="PTHR43013">
    <property type="entry name" value="GLUTAMYL-TRNA REDUCTASE"/>
    <property type="match status" value="1"/>
</dbReference>
<dbReference type="PANTHER" id="PTHR43013:SF1">
    <property type="entry name" value="GLUTAMYL-TRNA REDUCTASE"/>
    <property type="match status" value="1"/>
</dbReference>
<dbReference type="Pfam" id="PF00745">
    <property type="entry name" value="GlutR_dimer"/>
    <property type="match status" value="1"/>
</dbReference>
<dbReference type="Pfam" id="PF05201">
    <property type="entry name" value="GlutR_N"/>
    <property type="match status" value="1"/>
</dbReference>
<dbReference type="Pfam" id="PF01488">
    <property type="entry name" value="Shikimate_DH"/>
    <property type="match status" value="1"/>
</dbReference>
<dbReference type="PIRSF" id="PIRSF000445">
    <property type="entry name" value="4pyrrol_synth_GluRdtase"/>
    <property type="match status" value="1"/>
</dbReference>
<dbReference type="SUPFAM" id="SSF69742">
    <property type="entry name" value="Glutamyl tRNA-reductase catalytic, N-terminal domain"/>
    <property type="match status" value="1"/>
</dbReference>
<dbReference type="SUPFAM" id="SSF69075">
    <property type="entry name" value="Glutamyl tRNA-reductase dimerization domain"/>
    <property type="match status" value="1"/>
</dbReference>
<dbReference type="SUPFAM" id="SSF51735">
    <property type="entry name" value="NAD(P)-binding Rossmann-fold domains"/>
    <property type="match status" value="1"/>
</dbReference>
<dbReference type="PROSITE" id="PS00747">
    <property type="entry name" value="GLUTR"/>
    <property type="match status" value="1"/>
</dbReference>
<proteinExistence type="inferred from homology"/>